<dbReference type="EMBL" id="AB010693">
    <property type="protein sequence ID" value="BAB10881.1"/>
    <property type="molecule type" value="Genomic_DNA"/>
</dbReference>
<dbReference type="EMBL" id="CP002688">
    <property type="protein sequence ID" value="AED95183.1"/>
    <property type="molecule type" value="Genomic_DNA"/>
</dbReference>
<dbReference type="EMBL" id="CP002688">
    <property type="protein sequence ID" value="ANM68695.1"/>
    <property type="molecule type" value="Genomic_DNA"/>
</dbReference>
<dbReference type="EMBL" id="BT004298">
    <property type="protein sequence ID" value="AAO42296.1"/>
    <property type="molecule type" value="mRNA"/>
</dbReference>
<dbReference type="EMBL" id="BT005527">
    <property type="protein sequence ID" value="AAO63947.1"/>
    <property type="molecule type" value="mRNA"/>
</dbReference>
<dbReference type="RefSeq" id="NP_001330423.1">
    <property type="nucleotide sequence ID" value="NM_001344578.1"/>
</dbReference>
<dbReference type="RefSeq" id="NP_199311.1">
    <property type="nucleotide sequence ID" value="NM_123866.3"/>
</dbReference>
<dbReference type="BioGRID" id="19778">
    <property type="interactions" value="2"/>
</dbReference>
<dbReference type="FunCoup" id="Q9FL99">
    <property type="interactions" value="5"/>
</dbReference>
<dbReference type="STRING" id="3702.Q9FL99"/>
<dbReference type="iPTMnet" id="Q9FL99"/>
<dbReference type="PaxDb" id="3702-AT5G44980.1"/>
<dbReference type="ProteomicsDB" id="230493"/>
<dbReference type="EnsemblPlants" id="AT5G44980.1">
    <property type="protein sequence ID" value="AT5G44980.1"/>
    <property type="gene ID" value="AT5G44980"/>
</dbReference>
<dbReference type="EnsemblPlants" id="AT5G44980.2">
    <property type="protein sequence ID" value="AT5G44980.2"/>
    <property type="gene ID" value="AT5G44980"/>
</dbReference>
<dbReference type="GeneID" id="834529"/>
<dbReference type="Gramene" id="AT5G44980.1">
    <property type="protein sequence ID" value="AT5G44980.1"/>
    <property type="gene ID" value="AT5G44980"/>
</dbReference>
<dbReference type="Gramene" id="AT5G44980.2">
    <property type="protein sequence ID" value="AT5G44980.2"/>
    <property type="gene ID" value="AT5G44980"/>
</dbReference>
<dbReference type="KEGG" id="ath:AT5G44980"/>
<dbReference type="Araport" id="AT5G44980"/>
<dbReference type="TAIR" id="AT5G44980"/>
<dbReference type="HOGENOM" id="CLU_010721_1_3_1"/>
<dbReference type="InParanoid" id="Q9FL99"/>
<dbReference type="OMA" id="SYYLEEM"/>
<dbReference type="PhylomeDB" id="Q9FL99"/>
<dbReference type="PRO" id="PR:Q9FL99"/>
<dbReference type="Proteomes" id="UP000006548">
    <property type="component" value="Chromosome 5"/>
</dbReference>
<dbReference type="ExpressionAtlas" id="Q9FL99">
    <property type="expression patterns" value="baseline and differential"/>
</dbReference>
<dbReference type="CDD" id="cd22160">
    <property type="entry name" value="F-box_AtFBL13-like"/>
    <property type="match status" value="1"/>
</dbReference>
<dbReference type="Gene3D" id="3.80.10.10">
    <property type="entry name" value="Ribonuclease Inhibitor"/>
    <property type="match status" value="1"/>
</dbReference>
<dbReference type="InterPro" id="IPR036047">
    <property type="entry name" value="F-box-like_dom_sf"/>
</dbReference>
<dbReference type="InterPro" id="IPR053781">
    <property type="entry name" value="F-box_AtFBL13-like"/>
</dbReference>
<dbReference type="InterPro" id="IPR001810">
    <property type="entry name" value="F-box_dom"/>
</dbReference>
<dbReference type="InterPro" id="IPR006566">
    <property type="entry name" value="FBD"/>
</dbReference>
<dbReference type="InterPro" id="IPR050232">
    <property type="entry name" value="FBL13/AtMIF1-like"/>
</dbReference>
<dbReference type="InterPro" id="IPR032675">
    <property type="entry name" value="LRR_dom_sf"/>
</dbReference>
<dbReference type="InterPro" id="IPR055411">
    <property type="entry name" value="LRR_FXL15/At3g58940/PEG3-like"/>
</dbReference>
<dbReference type="PANTHER" id="PTHR31900">
    <property type="entry name" value="F-BOX/RNI SUPERFAMILY PROTEIN-RELATED"/>
    <property type="match status" value="1"/>
</dbReference>
<dbReference type="PANTHER" id="PTHR31900:SF33">
    <property type="entry name" value="PROTEIN WITH RNI-LIKE_FBD-LIKE DOMAIN"/>
    <property type="match status" value="1"/>
</dbReference>
<dbReference type="Pfam" id="PF00646">
    <property type="entry name" value="F-box"/>
    <property type="match status" value="1"/>
</dbReference>
<dbReference type="Pfam" id="PF08387">
    <property type="entry name" value="FBD"/>
    <property type="match status" value="1"/>
</dbReference>
<dbReference type="Pfam" id="PF24758">
    <property type="entry name" value="LRR_At5g56370"/>
    <property type="match status" value="1"/>
</dbReference>
<dbReference type="SMART" id="SM00579">
    <property type="entry name" value="FBD"/>
    <property type="match status" value="1"/>
</dbReference>
<dbReference type="SMART" id="SM00256">
    <property type="entry name" value="FBOX"/>
    <property type="match status" value="1"/>
</dbReference>
<dbReference type="SUPFAM" id="SSF81383">
    <property type="entry name" value="F-box domain"/>
    <property type="match status" value="1"/>
</dbReference>
<dbReference type="SUPFAM" id="SSF52047">
    <property type="entry name" value="RNI-like"/>
    <property type="match status" value="1"/>
</dbReference>
<dbReference type="PROSITE" id="PS50181">
    <property type="entry name" value="FBOX"/>
    <property type="match status" value="1"/>
</dbReference>
<organism>
    <name type="scientific">Arabidopsis thaliana</name>
    <name type="common">Mouse-ear cress</name>
    <dbReference type="NCBI Taxonomy" id="3702"/>
    <lineage>
        <taxon>Eukaryota</taxon>
        <taxon>Viridiplantae</taxon>
        <taxon>Streptophyta</taxon>
        <taxon>Embryophyta</taxon>
        <taxon>Tracheophyta</taxon>
        <taxon>Spermatophyta</taxon>
        <taxon>Magnoliopsida</taxon>
        <taxon>eudicotyledons</taxon>
        <taxon>Gunneridae</taxon>
        <taxon>Pentapetalae</taxon>
        <taxon>rosids</taxon>
        <taxon>malvids</taxon>
        <taxon>Brassicales</taxon>
        <taxon>Brassicaceae</taxon>
        <taxon>Camelineae</taxon>
        <taxon>Arabidopsis</taxon>
    </lineage>
</organism>
<name>FDL36_ARATH</name>
<sequence>MDRDYISELPDSLLTQILLELRTKDSVKTSVLSKRWRNLWLNVPGLELFTLQFTYPDREEIFVRFMDRFMEFKCRSRLKKFMITYVDCKGYRDRLMELIGTLVDHGLQHLYVFMHTFDRVDFKRQNIYKSKTLVSLKLHNVELKNSDFVVSLPCLKILKLENICHGEDGPLVVEKLISGCSVLEDLELIRPFDIRTHKVLLLLRVSSQTLKSFTLHFAIYKDRTDFSVEIDAPRLKYMTVEQSQSDSIVVKNLSSLFSIDIGTKFNPLRHEDLRMRNVFYDFLTGISSVKHMIICLWSLQRFSPYSKPGLIPKFQNLYHLKAQMWSSSTHLLEAFLESCPNLKNLILEYNVELDREQVDFTNVPQCLISTLEYVEIKEPNEKSTIKLVNYFLENSAVLKKLTLRFSYSSSIYLKSYKKLLTSTKLSPTCQVIFGC</sequence>
<proteinExistence type="evidence at transcript level"/>
<keyword id="KW-0433">Leucine-rich repeat</keyword>
<keyword id="KW-1185">Reference proteome</keyword>
<keyword id="KW-0677">Repeat</keyword>
<protein>
    <recommendedName>
        <fullName>F-box/FBD/LRR-repeat protein At5g44980</fullName>
    </recommendedName>
</protein>
<reference key="1">
    <citation type="journal article" date="1998" name="DNA Res.">
        <title>Structural analysis of Arabidopsis thaliana chromosome 5. V. Sequence features of the regions of 1,381,565 bp covered by twenty one physically assigned P1 and TAC clones.</title>
        <authorList>
            <person name="Kaneko T."/>
            <person name="Kotani H."/>
            <person name="Nakamura Y."/>
            <person name="Sato S."/>
            <person name="Asamizu E."/>
            <person name="Miyajima N."/>
            <person name="Tabata S."/>
        </authorList>
    </citation>
    <scope>NUCLEOTIDE SEQUENCE [LARGE SCALE GENOMIC DNA]</scope>
    <source>
        <strain>cv. Columbia</strain>
    </source>
</reference>
<reference key="2">
    <citation type="journal article" date="2017" name="Plant J.">
        <title>Araport11: a complete reannotation of the Arabidopsis thaliana reference genome.</title>
        <authorList>
            <person name="Cheng C.Y."/>
            <person name="Krishnakumar V."/>
            <person name="Chan A.P."/>
            <person name="Thibaud-Nissen F."/>
            <person name="Schobel S."/>
            <person name="Town C.D."/>
        </authorList>
    </citation>
    <scope>GENOME REANNOTATION</scope>
    <source>
        <strain>cv. Columbia</strain>
    </source>
</reference>
<reference key="3">
    <citation type="journal article" date="2003" name="Science">
        <title>Empirical analysis of transcriptional activity in the Arabidopsis genome.</title>
        <authorList>
            <person name="Yamada K."/>
            <person name="Lim J."/>
            <person name="Dale J.M."/>
            <person name="Chen H."/>
            <person name="Shinn P."/>
            <person name="Palm C.J."/>
            <person name="Southwick A.M."/>
            <person name="Wu H.C."/>
            <person name="Kim C.J."/>
            <person name="Nguyen M."/>
            <person name="Pham P.K."/>
            <person name="Cheuk R.F."/>
            <person name="Karlin-Newmann G."/>
            <person name="Liu S.X."/>
            <person name="Lam B."/>
            <person name="Sakano H."/>
            <person name="Wu T."/>
            <person name="Yu G."/>
            <person name="Miranda M."/>
            <person name="Quach H.L."/>
            <person name="Tripp M."/>
            <person name="Chang C.H."/>
            <person name="Lee J.M."/>
            <person name="Toriumi M.J."/>
            <person name="Chan M.M."/>
            <person name="Tang C.C."/>
            <person name="Onodera C.S."/>
            <person name="Deng J.M."/>
            <person name="Akiyama K."/>
            <person name="Ansari Y."/>
            <person name="Arakawa T."/>
            <person name="Banh J."/>
            <person name="Banno F."/>
            <person name="Bowser L."/>
            <person name="Brooks S.Y."/>
            <person name="Carninci P."/>
            <person name="Chao Q."/>
            <person name="Choy N."/>
            <person name="Enju A."/>
            <person name="Goldsmith A.D."/>
            <person name="Gurjal M."/>
            <person name="Hansen N.F."/>
            <person name="Hayashizaki Y."/>
            <person name="Johnson-Hopson C."/>
            <person name="Hsuan V.W."/>
            <person name="Iida K."/>
            <person name="Karnes M."/>
            <person name="Khan S."/>
            <person name="Koesema E."/>
            <person name="Ishida J."/>
            <person name="Jiang P.X."/>
            <person name="Jones T."/>
            <person name="Kawai J."/>
            <person name="Kamiya A."/>
            <person name="Meyers C."/>
            <person name="Nakajima M."/>
            <person name="Narusaka M."/>
            <person name="Seki M."/>
            <person name="Sakurai T."/>
            <person name="Satou M."/>
            <person name="Tamse R."/>
            <person name="Vaysberg M."/>
            <person name="Wallender E.K."/>
            <person name="Wong C."/>
            <person name="Yamamura Y."/>
            <person name="Yuan S."/>
            <person name="Shinozaki K."/>
            <person name="Davis R.W."/>
            <person name="Theologis A."/>
            <person name="Ecker J.R."/>
        </authorList>
    </citation>
    <scope>NUCLEOTIDE SEQUENCE [LARGE SCALE MRNA]</scope>
    <source>
        <strain>cv. Columbia</strain>
    </source>
</reference>
<gene>
    <name type="ordered locus">At5g44980</name>
    <name type="ORF">K21C13.17</name>
</gene>
<evidence type="ECO:0000255" key="1">
    <source>
        <dbReference type="PROSITE-ProRule" id="PRU00080"/>
    </source>
</evidence>
<accession>Q9FL99</accession>
<feature type="chain" id="PRO_0000283128" description="F-box/FBD/LRR-repeat protein At5g44980">
    <location>
        <begin position="1"/>
        <end position="435"/>
    </location>
</feature>
<feature type="domain" description="F-box" evidence="1">
    <location>
        <begin position="3"/>
        <end position="49"/>
    </location>
</feature>
<feature type="repeat" description="LRR 1">
    <location>
        <begin position="88"/>
        <end position="114"/>
    </location>
</feature>
<feature type="repeat" description="LRR 2">
    <location>
        <begin position="138"/>
        <end position="162"/>
    </location>
</feature>
<feature type="repeat" description="LRR 3">
    <location>
        <begin position="165"/>
        <end position="190"/>
    </location>
</feature>
<feature type="repeat" description="LRR 4">
    <location>
        <begin position="191"/>
        <end position="217"/>
    </location>
</feature>
<feature type="repeat" description="LRR 5">
    <location>
        <begin position="250"/>
        <end position="275"/>
    </location>
</feature>
<feature type="repeat" description="LRR 6">
    <location>
        <begin position="324"/>
        <end position="349"/>
    </location>
</feature>
<feature type="domain" description="FBD">
    <location>
        <begin position="355"/>
        <end position="405"/>
    </location>
</feature>